<organism>
    <name type="scientific">Phytoplasma mali (strain AT)</name>
    <dbReference type="NCBI Taxonomy" id="482235"/>
    <lineage>
        <taxon>Bacteria</taxon>
        <taxon>Bacillati</taxon>
        <taxon>Mycoplasmatota</taxon>
        <taxon>Mollicutes</taxon>
        <taxon>Acholeplasmatales</taxon>
        <taxon>Acholeplasmataceae</taxon>
        <taxon>Candidatus Phytoplasma</taxon>
        <taxon>16SrX (Apple proliferation group)</taxon>
    </lineage>
</organism>
<evidence type="ECO:0000255" key="1">
    <source>
        <dbReference type="HAMAP-Rule" id="MF_00020"/>
    </source>
</evidence>
<protein>
    <recommendedName>
        <fullName evidence="1">Acetate kinase</fullName>
        <ecNumber evidence="1">2.7.2.1</ecNumber>
    </recommendedName>
    <alternativeName>
        <fullName evidence="1">Acetokinase</fullName>
    </alternativeName>
</protein>
<sequence>MKIISVNAGSSSLKFKLFDMPKEELIFSGLIEKIGDQKSIFSLSYGNTKKETIMPVLNHQQAVKLLLDSLQINKIIDNLEEIKGVGHRIVQGGELFKDSVVLTEENILKIESLNDLAPLHNYANVLGIKAFEKNIPNIFQVGVFDTTFHQTIKQENFSYAIPYEWYQKYKIRKYGFHGISYKYVSNRTSEILANKDSKIIVCHAGNGVSLCAIEGNNSVDTSMGFTPLEGVPMGTRSGNIDPTIIEFISYKENKSIKEIMNILNKKSGFLGVSGVSNDARDIEISLQNGNKRSLLAHDVQIKRICDYIGSYYFLLKGIDALVFTAGMGENSSLFRKKIIQRLSFLGVFLDDEFNNSKGERIISTSNSFFKVLVIPTNEEIEIVREVCKIKN</sequence>
<reference key="1">
    <citation type="journal article" date="2008" name="BMC Genomics">
        <title>The linear chromosome of the plant-pathogenic mycoplasma 'Candidatus Phytoplasma mali'.</title>
        <authorList>
            <person name="Kube M."/>
            <person name="Schneider B."/>
            <person name="Kuhl H."/>
            <person name="Dandekar T."/>
            <person name="Heitmann K."/>
            <person name="Migdoll A.M."/>
            <person name="Reinhardt R."/>
            <person name="Seemueller E."/>
        </authorList>
    </citation>
    <scope>NUCLEOTIDE SEQUENCE [LARGE SCALE GENOMIC DNA]</scope>
    <source>
        <strain>AT</strain>
    </source>
</reference>
<proteinExistence type="inferred from homology"/>
<feature type="chain" id="PRO_1000116806" description="Acetate kinase">
    <location>
        <begin position="1"/>
        <end position="391"/>
    </location>
</feature>
<feature type="active site" description="Proton donor/acceptor" evidence="1">
    <location>
        <position position="145"/>
    </location>
</feature>
<feature type="binding site" evidence="1">
    <location>
        <position position="7"/>
    </location>
    <ligand>
        <name>Mg(2+)</name>
        <dbReference type="ChEBI" id="CHEBI:18420"/>
    </ligand>
</feature>
<feature type="binding site" evidence="1">
    <location>
        <position position="14"/>
    </location>
    <ligand>
        <name>ATP</name>
        <dbReference type="ChEBI" id="CHEBI:30616"/>
    </ligand>
</feature>
<feature type="binding site" evidence="1">
    <location>
        <position position="88"/>
    </location>
    <ligand>
        <name>substrate</name>
    </ligand>
</feature>
<feature type="binding site" evidence="1">
    <location>
        <begin position="203"/>
        <end position="207"/>
    </location>
    <ligand>
        <name>ATP</name>
        <dbReference type="ChEBI" id="CHEBI:30616"/>
    </ligand>
</feature>
<feature type="binding site" evidence="1">
    <location>
        <begin position="278"/>
        <end position="280"/>
    </location>
    <ligand>
        <name>ATP</name>
        <dbReference type="ChEBI" id="CHEBI:30616"/>
    </ligand>
</feature>
<feature type="binding site" evidence="1">
    <location>
        <begin position="326"/>
        <end position="330"/>
    </location>
    <ligand>
        <name>ATP</name>
        <dbReference type="ChEBI" id="CHEBI:30616"/>
    </ligand>
</feature>
<feature type="binding site" evidence="1">
    <location>
        <position position="378"/>
    </location>
    <ligand>
        <name>Mg(2+)</name>
        <dbReference type="ChEBI" id="CHEBI:18420"/>
    </ligand>
</feature>
<feature type="site" description="Transition state stabilizer" evidence="1">
    <location>
        <position position="177"/>
    </location>
</feature>
<feature type="site" description="Transition state stabilizer" evidence="1">
    <location>
        <position position="236"/>
    </location>
</feature>
<name>ACKA_PHYMT</name>
<keyword id="KW-0067">ATP-binding</keyword>
<keyword id="KW-0963">Cytoplasm</keyword>
<keyword id="KW-0418">Kinase</keyword>
<keyword id="KW-0460">Magnesium</keyword>
<keyword id="KW-0479">Metal-binding</keyword>
<keyword id="KW-0547">Nucleotide-binding</keyword>
<keyword id="KW-1185">Reference proteome</keyword>
<keyword id="KW-0808">Transferase</keyword>
<dbReference type="EC" id="2.7.2.1" evidence="1"/>
<dbReference type="EMBL" id="CU469464">
    <property type="protein sequence ID" value="CAP18506.1"/>
    <property type="molecule type" value="Genomic_DNA"/>
</dbReference>
<dbReference type="SMR" id="B3QZW9"/>
<dbReference type="STRING" id="37692.ATP_00319"/>
<dbReference type="KEGG" id="pml:ATP_00319"/>
<dbReference type="eggNOG" id="COG0282">
    <property type="taxonomic scope" value="Bacteria"/>
</dbReference>
<dbReference type="HOGENOM" id="CLU_020352_0_1_14"/>
<dbReference type="UniPathway" id="UPA00340">
    <property type="reaction ID" value="UER00458"/>
</dbReference>
<dbReference type="Proteomes" id="UP000002020">
    <property type="component" value="Chromosome"/>
</dbReference>
<dbReference type="GO" id="GO:0005737">
    <property type="term" value="C:cytoplasm"/>
    <property type="evidence" value="ECO:0007669"/>
    <property type="project" value="UniProtKB-SubCell"/>
</dbReference>
<dbReference type="GO" id="GO:0008776">
    <property type="term" value="F:acetate kinase activity"/>
    <property type="evidence" value="ECO:0007669"/>
    <property type="project" value="UniProtKB-UniRule"/>
</dbReference>
<dbReference type="GO" id="GO:0005524">
    <property type="term" value="F:ATP binding"/>
    <property type="evidence" value="ECO:0007669"/>
    <property type="project" value="UniProtKB-KW"/>
</dbReference>
<dbReference type="GO" id="GO:0000287">
    <property type="term" value="F:magnesium ion binding"/>
    <property type="evidence" value="ECO:0007669"/>
    <property type="project" value="UniProtKB-UniRule"/>
</dbReference>
<dbReference type="GO" id="GO:0006083">
    <property type="term" value="P:acetate metabolic process"/>
    <property type="evidence" value="ECO:0007669"/>
    <property type="project" value="TreeGrafter"/>
</dbReference>
<dbReference type="GO" id="GO:0006085">
    <property type="term" value="P:acetyl-CoA biosynthetic process"/>
    <property type="evidence" value="ECO:0007669"/>
    <property type="project" value="UniProtKB-UniRule"/>
</dbReference>
<dbReference type="CDD" id="cd24010">
    <property type="entry name" value="ASKHA_NBD_AcK_PK"/>
    <property type="match status" value="1"/>
</dbReference>
<dbReference type="Gene3D" id="3.30.420.40">
    <property type="match status" value="2"/>
</dbReference>
<dbReference type="HAMAP" id="MF_00020">
    <property type="entry name" value="Acetate_kinase"/>
    <property type="match status" value="1"/>
</dbReference>
<dbReference type="InterPro" id="IPR004372">
    <property type="entry name" value="Ac/propionate_kinase"/>
</dbReference>
<dbReference type="InterPro" id="IPR000890">
    <property type="entry name" value="Aliphatic_acid_kin_short-chain"/>
</dbReference>
<dbReference type="InterPro" id="IPR023865">
    <property type="entry name" value="Aliphatic_acid_kinase_CS"/>
</dbReference>
<dbReference type="InterPro" id="IPR043129">
    <property type="entry name" value="ATPase_NBD"/>
</dbReference>
<dbReference type="NCBIfam" id="TIGR00016">
    <property type="entry name" value="ackA"/>
    <property type="match status" value="1"/>
</dbReference>
<dbReference type="PANTHER" id="PTHR21060">
    <property type="entry name" value="ACETATE KINASE"/>
    <property type="match status" value="1"/>
</dbReference>
<dbReference type="PANTHER" id="PTHR21060:SF15">
    <property type="entry name" value="ACETATE KINASE-RELATED"/>
    <property type="match status" value="1"/>
</dbReference>
<dbReference type="Pfam" id="PF00871">
    <property type="entry name" value="Acetate_kinase"/>
    <property type="match status" value="1"/>
</dbReference>
<dbReference type="PIRSF" id="PIRSF000722">
    <property type="entry name" value="Acetate_prop_kin"/>
    <property type="match status" value="1"/>
</dbReference>
<dbReference type="PRINTS" id="PR00471">
    <property type="entry name" value="ACETATEKNASE"/>
</dbReference>
<dbReference type="SUPFAM" id="SSF53067">
    <property type="entry name" value="Actin-like ATPase domain"/>
    <property type="match status" value="2"/>
</dbReference>
<dbReference type="PROSITE" id="PS01075">
    <property type="entry name" value="ACETATE_KINASE_1"/>
    <property type="match status" value="1"/>
</dbReference>
<accession>B3QZW9</accession>
<comment type="function">
    <text evidence="1">Catalyzes the formation of acetyl phosphate from acetate and ATP. Can also catalyze the reverse reaction.</text>
</comment>
<comment type="catalytic activity">
    <reaction evidence="1">
        <text>acetate + ATP = acetyl phosphate + ADP</text>
        <dbReference type="Rhea" id="RHEA:11352"/>
        <dbReference type="ChEBI" id="CHEBI:22191"/>
        <dbReference type="ChEBI" id="CHEBI:30089"/>
        <dbReference type="ChEBI" id="CHEBI:30616"/>
        <dbReference type="ChEBI" id="CHEBI:456216"/>
        <dbReference type="EC" id="2.7.2.1"/>
    </reaction>
</comment>
<comment type="cofactor">
    <cofactor evidence="1">
        <name>Mg(2+)</name>
        <dbReference type="ChEBI" id="CHEBI:18420"/>
    </cofactor>
    <cofactor evidence="1">
        <name>Mn(2+)</name>
        <dbReference type="ChEBI" id="CHEBI:29035"/>
    </cofactor>
    <text evidence="1">Mg(2+). Can also accept Mn(2+).</text>
</comment>
<comment type="pathway">
    <text evidence="1">Metabolic intermediate biosynthesis; acetyl-CoA biosynthesis; acetyl-CoA from acetate: step 1/2.</text>
</comment>
<comment type="subunit">
    <text evidence="1">Homodimer.</text>
</comment>
<comment type="subcellular location">
    <subcellularLocation>
        <location evidence="1">Cytoplasm</location>
    </subcellularLocation>
</comment>
<comment type="similarity">
    <text evidence="1">Belongs to the acetokinase family.</text>
</comment>
<gene>
    <name evidence="1" type="primary">ackA</name>
    <name type="ordered locus">ATP_00319</name>
</gene>